<evidence type="ECO:0000250" key="1">
    <source>
        <dbReference type="UniProtKB" id="Q2FZV7"/>
    </source>
</evidence>
<evidence type="ECO:0000305" key="2"/>
<sequence>MAQDRKKVLVLGAGYAGLQTVTKLQKAISTEEAEITLINKNEYHYEATWLHEASAGTLNYEDVLYPVESVLKKDKVNFVQAEVTKIDRDAKKVETNQGIYDFDILVVALGFVSETFGIEGMKDHAFQIENVITARELSRHIEDKFANYAASKEKDDNDLSILVGGAGFTGVEFLGELTDRIPELCSKYGVDQNKVKITCVEAAPKMLPMFSEELVNHAVSYLEDRGVEFKIATPIVACNEKGFVVEVDGEKQQLNAGTSVWAAGVRGSKLMEESFEGVKRGRIVTKQDLTINGYDNIFVIGDCSAFIPAGEERPLPTTAQIAMQQGESVAKNIKRILNGESTEEFEYVDRGTVCSLGSHDGVGMVFDKPIAGKKAAFMKKVIDTRAVFKIGGIGLAFKKGKF</sequence>
<name>NDH_STAAW</name>
<protein>
    <recommendedName>
        <fullName evidence="1">Type II NADH:quinone oxidoreductase</fullName>
        <ecNumber evidence="1">1.6.5.9</ecNumber>
    </recommendedName>
    <alternativeName>
        <fullName evidence="1">NDH-2</fullName>
    </alternativeName>
</protein>
<feature type="chain" id="PRO_0000287369" description="Type II NADH:quinone oxidoreductase">
    <location>
        <begin position="1"/>
        <end position="402"/>
    </location>
</feature>
<feature type="active site" evidence="1">
    <location>
        <position position="172"/>
    </location>
</feature>
<feature type="binding site" evidence="1">
    <location>
        <begin position="12"/>
        <end position="16"/>
    </location>
    <ligand>
        <name>FAD</name>
        <dbReference type="ChEBI" id="CHEBI:57692"/>
    </ligand>
</feature>
<feature type="binding site" evidence="1">
    <location>
        <begin position="39"/>
        <end position="40"/>
    </location>
    <ligand>
        <name>FAD</name>
        <dbReference type="ChEBI" id="CHEBI:57692"/>
    </ligand>
</feature>
<feature type="binding site" evidence="1">
    <location>
        <position position="83"/>
    </location>
    <ligand>
        <name>FAD</name>
        <dbReference type="ChEBI" id="CHEBI:57692"/>
    </ligand>
</feature>
<feature type="binding site" evidence="1">
    <location>
        <position position="302"/>
    </location>
    <ligand>
        <name>FAD</name>
        <dbReference type="ChEBI" id="CHEBI:57692"/>
    </ligand>
</feature>
<feature type="binding site" evidence="1">
    <location>
        <begin position="319"/>
        <end position="320"/>
    </location>
    <ligand>
        <name>FAD</name>
        <dbReference type="ChEBI" id="CHEBI:57692"/>
    </ligand>
</feature>
<feature type="binding site" evidence="1">
    <location>
        <position position="379"/>
    </location>
    <ligand>
        <name>FAD</name>
        <dbReference type="ChEBI" id="CHEBI:57692"/>
    </ligand>
</feature>
<dbReference type="EC" id="1.6.5.9" evidence="1"/>
<dbReference type="EMBL" id="BA000033">
    <property type="protein sequence ID" value="BAB94688.1"/>
    <property type="molecule type" value="Genomic_DNA"/>
</dbReference>
<dbReference type="RefSeq" id="WP_000046075.1">
    <property type="nucleotide sequence ID" value="NC_003923.1"/>
</dbReference>
<dbReference type="SMR" id="Q8NXG0"/>
<dbReference type="KEGG" id="sam:MW0823"/>
<dbReference type="HOGENOM" id="CLU_021377_7_2_9"/>
<dbReference type="GO" id="GO:0005886">
    <property type="term" value="C:plasma membrane"/>
    <property type="evidence" value="ECO:0007669"/>
    <property type="project" value="UniProtKB-SubCell"/>
</dbReference>
<dbReference type="GO" id="GO:0003955">
    <property type="term" value="F:NAD(P)H dehydrogenase (quinone) activity"/>
    <property type="evidence" value="ECO:0007669"/>
    <property type="project" value="TreeGrafter"/>
</dbReference>
<dbReference type="GO" id="GO:0050136">
    <property type="term" value="F:NADH:ubiquinone reductase (non-electrogenic) activity"/>
    <property type="evidence" value="ECO:0007669"/>
    <property type="project" value="UniProtKB-EC"/>
</dbReference>
<dbReference type="GO" id="GO:0019646">
    <property type="term" value="P:aerobic electron transport chain"/>
    <property type="evidence" value="ECO:0007669"/>
    <property type="project" value="TreeGrafter"/>
</dbReference>
<dbReference type="FunFam" id="3.50.50.100:FF:000004">
    <property type="entry name" value="Pyridine nucleotide-disulfide oxidoreductase"/>
    <property type="match status" value="1"/>
</dbReference>
<dbReference type="Gene3D" id="3.50.50.100">
    <property type="match status" value="1"/>
</dbReference>
<dbReference type="InterPro" id="IPR036188">
    <property type="entry name" value="FAD/NAD-bd_sf"/>
</dbReference>
<dbReference type="InterPro" id="IPR023753">
    <property type="entry name" value="FAD/NAD-binding_dom"/>
</dbReference>
<dbReference type="InterPro" id="IPR051169">
    <property type="entry name" value="NADH-Q_oxidoreductase"/>
</dbReference>
<dbReference type="PANTHER" id="PTHR42913:SF3">
    <property type="entry name" value="64 KDA MITOCHONDRIAL NADH DEHYDROGENASE (EUROFUNG)"/>
    <property type="match status" value="1"/>
</dbReference>
<dbReference type="PANTHER" id="PTHR42913">
    <property type="entry name" value="APOPTOSIS-INDUCING FACTOR 1"/>
    <property type="match status" value="1"/>
</dbReference>
<dbReference type="Pfam" id="PF07992">
    <property type="entry name" value="Pyr_redox_2"/>
    <property type="match status" value="1"/>
</dbReference>
<dbReference type="PRINTS" id="PR00368">
    <property type="entry name" value="FADPNR"/>
</dbReference>
<dbReference type="SUPFAM" id="SSF51905">
    <property type="entry name" value="FAD/NAD(P)-binding domain"/>
    <property type="match status" value="2"/>
</dbReference>
<organism>
    <name type="scientific">Staphylococcus aureus (strain MW2)</name>
    <dbReference type="NCBI Taxonomy" id="196620"/>
    <lineage>
        <taxon>Bacteria</taxon>
        <taxon>Bacillati</taxon>
        <taxon>Bacillota</taxon>
        <taxon>Bacilli</taxon>
        <taxon>Bacillales</taxon>
        <taxon>Staphylococcaceae</taxon>
        <taxon>Staphylococcus</taxon>
    </lineage>
</organism>
<comment type="function">
    <text evidence="1">Alternative, nonproton pumping NADH:quinone oxidoreductase that delivers electrons to the respiratory chain by oxidation of NADH and reduction of quinones, and contributes to the regeneration of NAD(+).</text>
</comment>
<comment type="catalytic activity">
    <reaction evidence="1">
        <text>a quinone + NADH + H(+) = a quinol + NAD(+)</text>
        <dbReference type="Rhea" id="RHEA:46160"/>
        <dbReference type="ChEBI" id="CHEBI:15378"/>
        <dbReference type="ChEBI" id="CHEBI:24646"/>
        <dbReference type="ChEBI" id="CHEBI:57540"/>
        <dbReference type="ChEBI" id="CHEBI:57945"/>
        <dbReference type="ChEBI" id="CHEBI:132124"/>
        <dbReference type="EC" id="1.6.5.9"/>
    </reaction>
</comment>
<comment type="cofactor">
    <cofactor evidence="1">
        <name>FAD</name>
        <dbReference type="ChEBI" id="CHEBI:57692"/>
    </cofactor>
    <text evidence="1">Binds 1 FAD per subunit.</text>
</comment>
<comment type="subcellular location">
    <subcellularLocation>
        <location evidence="1">Cell membrane</location>
    </subcellularLocation>
</comment>
<comment type="similarity">
    <text evidence="2">Belongs to the NADH dehydrogenase family.</text>
</comment>
<reference key="1">
    <citation type="journal article" date="2002" name="Lancet">
        <title>Genome and virulence determinants of high virulence community-acquired MRSA.</title>
        <authorList>
            <person name="Baba T."/>
            <person name="Takeuchi F."/>
            <person name="Kuroda M."/>
            <person name="Yuzawa H."/>
            <person name="Aoki K."/>
            <person name="Oguchi A."/>
            <person name="Nagai Y."/>
            <person name="Iwama N."/>
            <person name="Asano K."/>
            <person name="Naimi T."/>
            <person name="Kuroda H."/>
            <person name="Cui L."/>
            <person name="Yamamoto K."/>
            <person name="Hiramatsu K."/>
        </authorList>
    </citation>
    <scope>NUCLEOTIDE SEQUENCE [LARGE SCALE GENOMIC DNA]</scope>
    <source>
        <strain>MW2</strain>
    </source>
</reference>
<proteinExistence type="inferred from homology"/>
<gene>
    <name type="ordered locus">MW0823</name>
</gene>
<accession>Q8NXG0</accession>
<keyword id="KW-1003">Cell membrane</keyword>
<keyword id="KW-0274">FAD</keyword>
<keyword id="KW-0285">Flavoprotein</keyword>
<keyword id="KW-0472">Membrane</keyword>
<keyword id="KW-0520">NAD</keyword>
<keyword id="KW-0560">Oxidoreductase</keyword>